<protein>
    <recommendedName>
        <fullName>Myeloid differentiation primary response protein MyD88</fullName>
    </recommendedName>
</protein>
<accession>A2TF48</accession>
<accession>A7UL70</accession>
<accession>A8I488</accession>
<accession>B1B361</accession>
<accession>C6ZCT2</accession>
<organism>
    <name type="scientific">Sus scrofa</name>
    <name type="common">Pig</name>
    <dbReference type="NCBI Taxonomy" id="9823"/>
    <lineage>
        <taxon>Eukaryota</taxon>
        <taxon>Metazoa</taxon>
        <taxon>Chordata</taxon>
        <taxon>Craniata</taxon>
        <taxon>Vertebrata</taxon>
        <taxon>Euteleostomi</taxon>
        <taxon>Mammalia</taxon>
        <taxon>Eutheria</taxon>
        <taxon>Laurasiatheria</taxon>
        <taxon>Artiodactyla</taxon>
        <taxon>Suina</taxon>
        <taxon>Suidae</taxon>
        <taxon>Sus</taxon>
    </lineage>
</organism>
<sequence length="293" mass="33254">MAAGGSGAESAPPTPSMSSLPLAALNVRVRHRLSLFLNVRTQVAADWTGLAEEMNFEYLEIRRLETHPDPTRSLLDDWQGRPGASVGRLLELLAKLGRDDVLVELGPSIEEDCRKYILKQQQEAAEKPLQVDSVDSSIPWMSGITIRDDPLGQMPEHFDAFICYCPSDIQFVQEMIRQLEQTNYRLKLCVSDRDVLPGTCVWSIASELIEKRCRRMVVVVSDDYLQSKECDFQTKFALSLSPGAHQKRLIPVKYKSMKKEFPSILRFITVCDYTNPCTKSWFWTRLARALSLP</sequence>
<comment type="function">
    <text evidence="2 3">Adapter protein involved in the Toll-like receptor and IL-1 receptor signaling pathway in the innate immune response. Acts via IRAK1, IRAK2, IRF7 and TRAF6, leading to NF-kappa-B activation, cytokine secretion and the inflammatory response. Increases IL-8 transcription. Involved in IL-18-mediated signaling pathway. Activates IRF1 resulting in its rapid migration into the nucleus to mediate an efficient induction of IFN-beta, NOS2/INOS, and IL12A genes. Upon TLR8 activation by GU-rich single-stranded RNA (GU-rich RNA) derived from viruses, induces IL1B release through NLRP3 inflammasome activation (By similarity). MyD88-mediated signaling in intestinal epithelial cells is crucial for maintenance of gut homeostasis and controls the expression of the antimicrobial lectin REG3G in the small intestine (By similarity).</text>
</comment>
<comment type="subunit">
    <text evidence="3">Homodimer. Also forms heterodimers with TIRAP. Binds to TLR2, TLR4, IRAK1, IRAK2 and IRAK4 via their respective TIR domains. Interacts with IL18R1. Interacts with BMX, IL1RL1, IKBKE and IRF7. Interacts with LRRFIP1 and LRRFIP2; this interaction positively regulates Toll-like receptor (TLR) signaling in response to agonist. Interacts with FLII. LRRFIP1 and LRRFIP2 compete with FLII for MYD88-binding. Interacts with IRF1. Upon IL1B treatment, forms a complex with PELI1, IRAK1, IRAK4 and TRAF6; this complex recruits MAP3K7/TAK1, TAB1 and TAB2 to mediate NF-kappa-B activation. Direct binding of SMAD6 to PELI1 prevents the complex formation and hence negatively regulates IL1R-TLR signaling and eventually NF-kappa-B-mediated gene expression. May interact with PIK3AP1. Interacts (via TIR domain) with DHX9 (via H2A and OB-fold regions); this interaction is direct. Interacts with OTUD4 deubiquitinase; the interaction is direct.</text>
</comment>
<comment type="subcellular location">
    <subcellularLocation>
        <location evidence="3">Cytoplasm</location>
    </subcellularLocation>
    <subcellularLocation>
        <location evidence="3">Nucleus</location>
    </subcellularLocation>
</comment>
<comment type="tissue specificity">
    <text evidence="6">Expressed in esophagus, duodenum, jejenum, ileum, ileal Peyer patches, mesenteric lymph node, colon and spleen.</text>
</comment>
<comment type="domain">
    <text evidence="2">The intermediate domain (ID) is required for the phosphorylation and activation of IRAK.</text>
</comment>
<comment type="PTM">
    <text evidence="3">Ubiquitinated; undergoes 'Lys-63'-linked polyubiquitination. OTUD4 specifically hydrolyzes 'Lys-63'-linked polyubiquitinated MYD88. Deubiquitinated by USP3 that cleaves 'Lys-63'-linked ubiquitin chains leading to inhibition of MYD88-induced NF-kappa-B signaling.</text>
</comment>
<keyword id="KW-0963">Cytoplasm</keyword>
<keyword id="KW-0391">Immunity</keyword>
<keyword id="KW-0395">Inflammatory response</keyword>
<keyword id="KW-0399">Innate immunity</keyword>
<keyword id="KW-0539">Nucleus</keyword>
<keyword id="KW-0597">Phosphoprotein</keyword>
<keyword id="KW-1185">Reference proteome</keyword>
<keyword id="KW-0832">Ubl conjugation</keyword>
<gene>
    <name type="primary">MYD88</name>
</gene>
<evidence type="ECO:0000250" key="1"/>
<evidence type="ECO:0000250" key="2">
    <source>
        <dbReference type="UniProtKB" id="P22366"/>
    </source>
</evidence>
<evidence type="ECO:0000250" key="3">
    <source>
        <dbReference type="UniProtKB" id="Q99836"/>
    </source>
</evidence>
<evidence type="ECO:0000255" key="4">
    <source>
        <dbReference type="PROSITE-ProRule" id="PRU00064"/>
    </source>
</evidence>
<evidence type="ECO:0000255" key="5">
    <source>
        <dbReference type="PROSITE-ProRule" id="PRU00204"/>
    </source>
</evidence>
<evidence type="ECO:0000269" key="6">
    <source>
    </source>
</evidence>
<evidence type="ECO:0000305" key="7"/>
<reference key="1">
    <citation type="journal article" date="2007" name="Cell. Mol. Immunol.">
        <title>Molecular cloning and functional characterization of porcine MyD88 essential for TLR signaling.</title>
        <authorList>
            <person name="Tohno M."/>
            <person name="Shimazu T."/>
            <person name="Aso H."/>
            <person name="Kawai Y."/>
            <person name="Saito T."/>
            <person name="Kitazawa H."/>
        </authorList>
    </citation>
    <scope>NUCLEOTIDE SEQUENCE [MRNA]</scope>
    <scope>TISSUE SPECIFICITY</scope>
    <source>
        <tissue>Peyer patch</tissue>
    </source>
</reference>
<reference key="2">
    <citation type="submission" date="2006-12" db="EMBL/GenBank/DDBJ databases">
        <title>Molecular cloning and tissue-specific expression of porcine myeloid differentiation primary response gene 88 (MYD88).</title>
        <authorList>
            <person name="Li Q."/>
            <person name="Li X."/>
            <person name="Zhu L."/>
            <person name="Chen L."/>
            <person name="Li M."/>
            <person name="Wu X."/>
        </authorList>
    </citation>
    <scope>NUCLEOTIDE SEQUENCE [MRNA]</scope>
</reference>
<reference key="3">
    <citation type="submission" date="2007-07" db="EMBL/GenBank/DDBJ databases">
        <authorList>
            <person name="Li K."/>
            <person name="Li X."/>
            <person name="Liu H."/>
            <person name="Yang S."/>
            <person name="Tang Z."/>
            <person name="Ma Y."/>
            <person name="Chu M."/>
        </authorList>
    </citation>
    <scope>NUCLEOTIDE SEQUENCE [GENOMIC DNA / MRNA]</scope>
</reference>
<reference key="4">
    <citation type="submission" date="2007-08" db="EMBL/GenBank/DDBJ databases">
        <title>Molecular cloning and sequence analysis of porcine myeloid differentiation primary response gene 88 (MYD88).</title>
        <authorList>
            <person name="He Y."/>
            <person name="Wang D."/>
            <person name="Jiang Y."/>
            <person name="Fang L."/>
            <person name="Chen H."/>
            <person name="Xiao S."/>
        </authorList>
    </citation>
    <scope>NUCLEOTIDE SEQUENCE [MRNA]</scope>
</reference>
<reference key="5">
    <citation type="journal article" date="2007" name="Gene Ther.">
        <title>Toll-like receptor 7 and MyD88 knockdown by lentivirus-mediated RNA interference to porcine dendritic cell subsets.</title>
        <authorList>
            <person name="Alves M.P."/>
            <person name="Neuhaus V."/>
            <person name="Guzylack-Piriou L."/>
            <person name="Ruggli N."/>
            <person name="McCullough K.C."/>
            <person name="Summerfield A."/>
        </authorList>
    </citation>
    <scope>NUCLEOTIDE SEQUENCE [MRNA] OF 58-214</scope>
</reference>
<feature type="chain" id="PRO_0000393136" description="Myeloid differentiation primary response protein MyD88">
    <location>
        <begin position="1"/>
        <end position="293"/>
    </location>
</feature>
<feature type="domain" description="Death" evidence="4">
    <location>
        <begin position="32"/>
        <end position="109"/>
    </location>
</feature>
<feature type="domain" description="TIR" evidence="5">
    <location>
        <begin position="156"/>
        <end position="290"/>
    </location>
</feature>
<feature type="region of interest" description="Intermediate domain" evidence="1">
    <location>
        <begin position="110"/>
        <end position="152"/>
    </location>
</feature>
<feature type="modified residue" description="Phosphoserine" evidence="3">
    <location>
        <position position="241"/>
    </location>
</feature>
<feature type="sequence conflict" description="In Ref. 1; BAG12314 and 3; ABW74617/ABW74618." evidence="7" ref="1 3">
    <original>A</original>
    <variation>E</variation>
    <location>
        <position position="3"/>
    </location>
</feature>
<feature type="sequence conflict" description="In Ref. 2; ABM90642." evidence="7" ref="2">
    <original>I</original>
    <variation>T</variation>
    <location>
        <position position="169"/>
    </location>
</feature>
<feature type="sequence conflict" description="In Ref. 1; BAG12314." evidence="7" ref="1">
    <original>V</original>
    <variation>A</variation>
    <location>
        <position position="218"/>
    </location>
</feature>
<dbReference type="EMBL" id="AB292176">
    <property type="protein sequence ID" value="BAG12314.1"/>
    <property type="molecule type" value="mRNA"/>
</dbReference>
<dbReference type="EMBL" id="EF198416">
    <property type="protein sequence ID" value="ABM90642.1"/>
    <property type="molecule type" value="mRNA"/>
</dbReference>
<dbReference type="EMBL" id="EU056736">
    <property type="protein sequence ID" value="ABW74617.1"/>
    <property type="molecule type" value="mRNA"/>
</dbReference>
<dbReference type="EMBL" id="EU056737">
    <property type="protein sequence ID" value="ABW74618.1"/>
    <property type="molecule type" value="Genomic_DNA"/>
</dbReference>
<dbReference type="EMBL" id="EU077229">
    <property type="protein sequence ID" value="ABU54860.1"/>
    <property type="molecule type" value="mRNA"/>
</dbReference>
<dbReference type="EMBL" id="EU155133">
    <property type="protein sequence ID" value="ABV91305.1"/>
    <property type="molecule type" value="mRNA"/>
</dbReference>
<dbReference type="RefSeq" id="NP_001093393.1">
    <property type="nucleotide sequence ID" value="NM_001099923.1"/>
</dbReference>
<dbReference type="SMR" id="A2TF48"/>
<dbReference type="FunCoup" id="A2TF48">
    <property type="interactions" value="1037"/>
</dbReference>
<dbReference type="STRING" id="9823.ENSSSCP00000011996"/>
<dbReference type="GlyGen" id="A2TF48">
    <property type="glycosylation" value="1 site"/>
</dbReference>
<dbReference type="PaxDb" id="9823-ENSSSCP00000011996"/>
<dbReference type="GeneID" id="396646"/>
<dbReference type="KEGG" id="ssc:396646"/>
<dbReference type="CTD" id="4615"/>
<dbReference type="eggNOG" id="ENOG502QWKI">
    <property type="taxonomic scope" value="Eukaryota"/>
</dbReference>
<dbReference type="HOGENOM" id="CLU_045884_0_0_1"/>
<dbReference type="InParanoid" id="A2TF48"/>
<dbReference type="OrthoDB" id="10037120at2759"/>
<dbReference type="TreeFam" id="TF326264"/>
<dbReference type="Proteomes" id="UP000008227">
    <property type="component" value="Unplaced"/>
</dbReference>
<dbReference type="Proteomes" id="UP000314985">
    <property type="component" value="Unplaced"/>
</dbReference>
<dbReference type="Proteomes" id="UP000694570">
    <property type="component" value="Unplaced"/>
</dbReference>
<dbReference type="Proteomes" id="UP000694571">
    <property type="component" value="Unplaced"/>
</dbReference>
<dbReference type="Proteomes" id="UP000694720">
    <property type="component" value="Unplaced"/>
</dbReference>
<dbReference type="Proteomes" id="UP000694722">
    <property type="component" value="Unplaced"/>
</dbReference>
<dbReference type="Proteomes" id="UP000694723">
    <property type="component" value="Unplaced"/>
</dbReference>
<dbReference type="Proteomes" id="UP000694724">
    <property type="component" value="Unplaced"/>
</dbReference>
<dbReference type="Proteomes" id="UP000694725">
    <property type="component" value="Unplaced"/>
</dbReference>
<dbReference type="Proteomes" id="UP000694726">
    <property type="component" value="Unplaced"/>
</dbReference>
<dbReference type="Proteomes" id="UP000694727">
    <property type="component" value="Unplaced"/>
</dbReference>
<dbReference type="Proteomes" id="UP000694728">
    <property type="component" value="Unplaced"/>
</dbReference>
<dbReference type="GO" id="GO:0005737">
    <property type="term" value="C:cytoplasm"/>
    <property type="evidence" value="ECO:0007669"/>
    <property type="project" value="UniProtKB-SubCell"/>
</dbReference>
<dbReference type="GO" id="GO:0005634">
    <property type="term" value="C:nucleus"/>
    <property type="evidence" value="ECO:0007669"/>
    <property type="project" value="UniProtKB-SubCell"/>
</dbReference>
<dbReference type="GO" id="GO:0005886">
    <property type="term" value="C:plasma membrane"/>
    <property type="evidence" value="ECO:0000318"/>
    <property type="project" value="GO_Central"/>
</dbReference>
<dbReference type="GO" id="GO:0070976">
    <property type="term" value="F:TIR domain binding"/>
    <property type="evidence" value="ECO:0007669"/>
    <property type="project" value="InterPro"/>
</dbReference>
<dbReference type="GO" id="GO:0035325">
    <property type="term" value="F:Toll-like receptor binding"/>
    <property type="evidence" value="ECO:0000318"/>
    <property type="project" value="GO_Central"/>
</dbReference>
<dbReference type="GO" id="GO:0050830">
    <property type="term" value="P:defense response to Gram-positive bacterium"/>
    <property type="evidence" value="ECO:0000250"/>
    <property type="project" value="UniProtKB"/>
</dbReference>
<dbReference type="GO" id="GO:0051607">
    <property type="term" value="P:defense response to virus"/>
    <property type="evidence" value="ECO:0000250"/>
    <property type="project" value="UniProtKB"/>
</dbReference>
<dbReference type="GO" id="GO:0006954">
    <property type="term" value="P:inflammatory response"/>
    <property type="evidence" value="ECO:0007669"/>
    <property type="project" value="UniProtKB-KW"/>
</dbReference>
<dbReference type="GO" id="GO:0045087">
    <property type="term" value="P:innate immune response"/>
    <property type="evidence" value="ECO:0000318"/>
    <property type="project" value="GO_Central"/>
</dbReference>
<dbReference type="GO" id="GO:0002755">
    <property type="term" value="P:MyD88-dependent toll-like receptor signaling pathway"/>
    <property type="evidence" value="ECO:0007669"/>
    <property type="project" value="InterPro"/>
</dbReference>
<dbReference type="GO" id="GO:0043123">
    <property type="term" value="P:positive regulation of canonical NF-kappaB signal transduction"/>
    <property type="evidence" value="ECO:0007669"/>
    <property type="project" value="InterPro"/>
</dbReference>
<dbReference type="GO" id="GO:0032731">
    <property type="term" value="P:positive regulation of interleukin-1 beta production"/>
    <property type="evidence" value="ECO:0000250"/>
    <property type="project" value="UniProtKB"/>
</dbReference>
<dbReference type="GO" id="GO:1900227">
    <property type="term" value="P:positive regulation of NLRP3 inflammasome complex assembly"/>
    <property type="evidence" value="ECO:0000250"/>
    <property type="project" value="UniProtKB"/>
</dbReference>
<dbReference type="GO" id="GO:0008063">
    <property type="term" value="P:Toll signaling pathway"/>
    <property type="evidence" value="ECO:0000318"/>
    <property type="project" value="GO_Central"/>
</dbReference>
<dbReference type="GO" id="GO:0034142">
    <property type="term" value="P:toll-like receptor 4 signaling pathway"/>
    <property type="evidence" value="ECO:0000318"/>
    <property type="project" value="GO_Central"/>
</dbReference>
<dbReference type="GO" id="GO:0034158">
    <property type="term" value="P:toll-like receptor 8 signaling pathway"/>
    <property type="evidence" value="ECO:0000250"/>
    <property type="project" value="UniProtKB"/>
</dbReference>
<dbReference type="CDD" id="cd08312">
    <property type="entry name" value="Death_MyD88"/>
    <property type="match status" value="1"/>
</dbReference>
<dbReference type="FunFam" id="1.10.533.10:FF:000029">
    <property type="entry name" value="Myeloid differentiation primary response protein MyD88"/>
    <property type="match status" value="1"/>
</dbReference>
<dbReference type="FunFam" id="3.40.50.10140:FF:000005">
    <property type="entry name" value="Myeloid differentiation primary response protein MyD88"/>
    <property type="match status" value="1"/>
</dbReference>
<dbReference type="Gene3D" id="1.10.533.10">
    <property type="entry name" value="Death Domain, Fas"/>
    <property type="match status" value="1"/>
</dbReference>
<dbReference type="Gene3D" id="3.40.50.10140">
    <property type="entry name" value="Toll/interleukin-1 receptor homology (TIR) domain"/>
    <property type="match status" value="1"/>
</dbReference>
<dbReference type="InterPro" id="IPR011029">
    <property type="entry name" value="DEATH-like_dom_sf"/>
</dbReference>
<dbReference type="InterPro" id="IPR000488">
    <property type="entry name" value="Death_dom"/>
</dbReference>
<dbReference type="InterPro" id="IPR034249">
    <property type="entry name" value="MyD88_Death"/>
</dbReference>
<dbReference type="InterPro" id="IPR017281">
    <property type="entry name" value="Myelin_different_resp_MyD88"/>
</dbReference>
<dbReference type="InterPro" id="IPR000157">
    <property type="entry name" value="TIR_dom"/>
</dbReference>
<dbReference type="InterPro" id="IPR035897">
    <property type="entry name" value="Toll_tir_struct_dom_sf"/>
</dbReference>
<dbReference type="PANTHER" id="PTHR15079">
    <property type="entry name" value="MYD88"/>
    <property type="match status" value="1"/>
</dbReference>
<dbReference type="PANTHER" id="PTHR15079:SF3">
    <property type="entry name" value="MYELOID DIFFERENTIATION PRIMARY RESPONSE PROTEIN MYD88"/>
    <property type="match status" value="1"/>
</dbReference>
<dbReference type="Pfam" id="PF00531">
    <property type="entry name" value="Death"/>
    <property type="match status" value="1"/>
</dbReference>
<dbReference type="Pfam" id="PF13676">
    <property type="entry name" value="TIR_2"/>
    <property type="match status" value="1"/>
</dbReference>
<dbReference type="PIRSF" id="PIRSF037756">
    <property type="entry name" value="MyD88"/>
    <property type="match status" value="1"/>
</dbReference>
<dbReference type="SMART" id="SM00005">
    <property type="entry name" value="DEATH"/>
    <property type="match status" value="1"/>
</dbReference>
<dbReference type="SMART" id="SM00255">
    <property type="entry name" value="TIR"/>
    <property type="match status" value="1"/>
</dbReference>
<dbReference type="SUPFAM" id="SSF47986">
    <property type="entry name" value="DEATH domain"/>
    <property type="match status" value="1"/>
</dbReference>
<dbReference type="SUPFAM" id="SSF52200">
    <property type="entry name" value="Toll/Interleukin receptor TIR domain"/>
    <property type="match status" value="1"/>
</dbReference>
<dbReference type="PROSITE" id="PS50017">
    <property type="entry name" value="DEATH_DOMAIN"/>
    <property type="match status" value="1"/>
</dbReference>
<dbReference type="PROSITE" id="PS50104">
    <property type="entry name" value="TIR"/>
    <property type="match status" value="1"/>
</dbReference>
<name>MYD88_PIG</name>
<proteinExistence type="evidence at transcript level"/>